<reference key="1">
    <citation type="journal article" date="2004" name="PLoS Biol.">
        <title>Phylogenomics of the reproductive parasite Wolbachia pipientis wMel: a streamlined genome overrun by mobile genetic elements.</title>
        <authorList>
            <person name="Wu M."/>
            <person name="Sun L.V."/>
            <person name="Vamathevan J.J."/>
            <person name="Riegler M."/>
            <person name="DeBoy R.T."/>
            <person name="Brownlie J.C."/>
            <person name="McGraw E.A."/>
            <person name="Martin W."/>
            <person name="Esser C."/>
            <person name="Ahmadinejad N."/>
            <person name="Wiegand C."/>
            <person name="Madupu R."/>
            <person name="Beanan M.J."/>
            <person name="Brinkac L.M."/>
            <person name="Daugherty S.C."/>
            <person name="Durkin A.S."/>
            <person name="Kolonay J.F."/>
            <person name="Nelson W.C."/>
            <person name="Mohamoud Y."/>
            <person name="Lee P."/>
            <person name="Berry K.J."/>
            <person name="Young M.B."/>
            <person name="Utterback T.R."/>
            <person name="Weidman J.F."/>
            <person name="Nierman W.C."/>
            <person name="Paulsen I.T."/>
            <person name="Nelson K.E."/>
            <person name="Tettelin H."/>
            <person name="O'Neill S.L."/>
            <person name="Eisen J.A."/>
        </authorList>
    </citation>
    <scope>NUCLEOTIDE SEQUENCE [LARGE SCALE GENOMIC DNA]</scope>
</reference>
<evidence type="ECO:0000255" key="1">
    <source>
        <dbReference type="HAMAP-Rule" id="MF_01320"/>
    </source>
</evidence>
<evidence type="ECO:0000256" key="2">
    <source>
        <dbReference type="SAM" id="MobiDB-lite"/>
    </source>
</evidence>
<evidence type="ECO:0000305" key="3"/>
<proteinExistence type="inferred from homology"/>
<comment type="function">
    <text evidence="1">One of the primary rRNA binding proteins. Required for association of the 30S and 50S subunits to form the 70S ribosome, for tRNA binding and peptide bond formation. It has been suggested to have peptidyltransferase activity; this is somewhat controversial. Makes several contacts with the 16S rRNA in the 70S ribosome.</text>
</comment>
<comment type="subunit">
    <text evidence="1">Part of the 50S ribosomal subunit. Forms a bridge to the 30S subunit in the 70S ribosome.</text>
</comment>
<comment type="similarity">
    <text evidence="1">Belongs to the universal ribosomal protein uL2 family.</text>
</comment>
<accession>Q73H89</accession>
<gene>
    <name evidence="1" type="primary">rplB</name>
    <name type="ordered locus">WD_0678</name>
</gene>
<protein>
    <recommendedName>
        <fullName evidence="1">Large ribosomal subunit protein uL2</fullName>
    </recommendedName>
    <alternativeName>
        <fullName evidence="3">50S ribosomal protein L2</fullName>
    </alternativeName>
</protein>
<name>RL2_WOLPM</name>
<dbReference type="EMBL" id="AE017196">
    <property type="protein sequence ID" value="AAS14376.1"/>
    <property type="molecule type" value="Genomic_DNA"/>
</dbReference>
<dbReference type="RefSeq" id="WP_010962754.1">
    <property type="nucleotide sequence ID" value="NZ_OX384529.1"/>
</dbReference>
<dbReference type="SMR" id="Q73H89"/>
<dbReference type="EnsemblBacteria" id="AAS14376">
    <property type="protein sequence ID" value="AAS14376"/>
    <property type="gene ID" value="WD_0678"/>
</dbReference>
<dbReference type="GeneID" id="70036161"/>
<dbReference type="KEGG" id="wol:WD_0678"/>
<dbReference type="eggNOG" id="COG0090">
    <property type="taxonomic scope" value="Bacteria"/>
</dbReference>
<dbReference type="Proteomes" id="UP000008215">
    <property type="component" value="Chromosome"/>
</dbReference>
<dbReference type="GO" id="GO:0015934">
    <property type="term" value="C:large ribosomal subunit"/>
    <property type="evidence" value="ECO:0007669"/>
    <property type="project" value="InterPro"/>
</dbReference>
<dbReference type="GO" id="GO:0019843">
    <property type="term" value="F:rRNA binding"/>
    <property type="evidence" value="ECO:0007669"/>
    <property type="project" value="UniProtKB-UniRule"/>
</dbReference>
<dbReference type="GO" id="GO:0003735">
    <property type="term" value="F:structural constituent of ribosome"/>
    <property type="evidence" value="ECO:0007669"/>
    <property type="project" value="InterPro"/>
</dbReference>
<dbReference type="GO" id="GO:0016740">
    <property type="term" value="F:transferase activity"/>
    <property type="evidence" value="ECO:0007669"/>
    <property type="project" value="InterPro"/>
</dbReference>
<dbReference type="GO" id="GO:0006412">
    <property type="term" value="P:translation"/>
    <property type="evidence" value="ECO:0007669"/>
    <property type="project" value="UniProtKB-UniRule"/>
</dbReference>
<dbReference type="FunFam" id="2.30.30.30:FF:000001">
    <property type="entry name" value="50S ribosomal protein L2"/>
    <property type="match status" value="1"/>
</dbReference>
<dbReference type="FunFam" id="4.10.950.10:FF:000001">
    <property type="entry name" value="50S ribosomal protein L2"/>
    <property type="match status" value="1"/>
</dbReference>
<dbReference type="Gene3D" id="2.30.30.30">
    <property type="match status" value="1"/>
</dbReference>
<dbReference type="Gene3D" id="2.40.50.140">
    <property type="entry name" value="Nucleic acid-binding proteins"/>
    <property type="match status" value="1"/>
</dbReference>
<dbReference type="Gene3D" id="4.10.950.10">
    <property type="entry name" value="Ribosomal protein L2, domain 3"/>
    <property type="match status" value="1"/>
</dbReference>
<dbReference type="HAMAP" id="MF_01320_B">
    <property type="entry name" value="Ribosomal_uL2_B"/>
    <property type="match status" value="1"/>
</dbReference>
<dbReference type="InterPro" id="IPR012340">
    <property type="entry name" value="NA-bd_OB-fold"/>
</dbReference>
<dbReference type="InterPro" id="IPR014722">
    <property type="entry name" value="Rib_uL2_dom2"/>
</dbReference>
<dbReference type="InterPro" id="IPR002171">
    <property type="entry name" value="Ribosomal_uL2"/>
</dbReference>
<dbReference type="InterPro" id="IPR005880">
    <property type="entry name" value="Ribosomal_uL2_bac/org-type"/>
</dbReference>
<dbReference type="InterPro" id="IPR022669">
    <property type="entry name" value="Ribosomal_uL2_C"/>
</dbReference>
<dbReference type="InterPro" id="IPR022671">
    <property type="entry name" value="Ribosomal_uL2_CS"/>
</dbReference>
<dbReference type="InterPro" id="IPR014726">
    <property type="entry name" value="Ribosomal_uL2_dom3"/>
</dbReference>
<dbReference type="InterPro" id="IPR022666">
    <property type="entry name" value="Ribosomal_uL2_RNA-bd_dom"/>
</dbReference>
<dbReference type="InterPro" id="IPR008991">
    <property type="entry name" value="Translation_prot_SH3-like_sf"/>
</dbReference>
<dbReference type="NCBIfam" id="TIGR01171">
    <property type="entry name" value="rplB_bact"/>
    <property type="match status" value="1"/>
</dbReference>
<dbReference type="PANTHER" id="PTHR13691:SF5">
    <property type="entry name" value="LARGE RIBOSOMAL SUBUNIT PROTEIN UL2M"/>
    <property type="match status" value="1"/>
</dbReference>
<dbReference type="PANTHER" id="PTHR13691">
    <property type="entry name" value="RIBOSOMAL PROTEIN L2"/>
    <property type="match status" value="1"/>
</dbReference>
<dbReference type="Pfam" id="PF00181">
    <property type="entry name" value="Ribosomal_L2"/>
    <property type="match status" value="1"/>
</dbReference>
<dbReference type="Pfam" id="PF03947">
    <property type="entry name" value="Ribosomal_L2_C"/>
    <property type="match status" value="1"/>
</dbReference>
<dbReference type="PIRSF" id="PIRSF002158">
    <property type="entry name" value="Ribosomal_L2"/>
    <property type="match status" value="1"/>
</dbReference>
<dbReference type="SMART" id="SM01383">
    <property type="entry name" value="Ribosomal_L2"/>
    <property type="match status" value="1"/>
</dbReference>
<dbReference type="SMART" id="SM01382">
    <property type="entry name" value="Ribosomal_L2_C"/>
    <property type="match status" value="1"/>
</dbReference>
<dbReference type="SUPFAM" id="SSF50249">
    <property type="entry name" value="Nucleic acid-binding proteins"/>
    <property type="match status" value="1"/>
</dbReference>
<dbReference type="SUPFAM" id="SSF50104">
    <property type="entry name" value="Translation proteins SH3-like domain"/>
    <property type="match status" value="1"/>
</dbReference>
<dbReference type="PROSITE" id="PS00467">
    <property type="entry name" value="RIBOSOMAL_L2"/>
    <property type="match status" value="1"/>
</dbReference>
<organism>
    <name type="scientific">Wolbachia pipientis wMel</name>
    <dbReference type="NCBI Taxonomy" id="163164"/>
    <lineage>
        <taxon>Bacteria</taxon>
        <taxon>Pseudomonadati</taxon>
        <taxon>Pseudomonadota</taxon>
        <taxon>Alphaproteobacteria</taxon>
        <taxon>Rickettsiales</taxon>
        <taxon>Anaplasmataceae</taxon>
        <taxon>Wolbachieae</taxon>
        <taxon>Wolbachia</taxon>
    </lineage>
</organism>
<keyword id="KW-0687">Ribonucleoprotein</keyword>
<keyword id="KW-0689">Ribosomal protein</keyword>
<keyword id="KW-0694">RNA-binding</keyword>
<keyword id="KW-0699">rRNA-binding</keyword>
<feature type="chain" id="PRO_0000237265" description="Large ribosomal subunit protein uL2">
    <location>
        <begin position="1"/>
        <end position="274"/>
    </location>
</feature>
<feature type="region of interest" description="Disordered" evidence="2">
    <location>
        <begin position="21"/>
        <end position="59"/>
    </location>
</feature>
<feature type="region of interest" description="Disordered" evidence="2">
    <location>
        <begin position="224"/>
        <end position="274"/>
    </location>
</feature>
<feature type="compositionally biased region" description="Low complexity" evidence="2">
    <location>
        <begin position="32"/>
        <end position="42"/>
    </location>
</feature>
<feature type="compositionally biased region" description="Basic residues" evidence="2">
    <location>
        <begin position="45"/>
        <end position="59"/>
    </location>
</feature>
<feature type="compositionally biased region" description="Basic and acidic residues" evidence="2">
    <location>
        <begin position="263"/>
        <end position="274"/>
    </location>
</feature>
<sequence length="274" mass="29674">MGMKFFNPVTPSSRGTVLVSKVGLSKDEPEKSLTSGKKSSGGRNNHGRITTRHRGGGHKKKYRVIDFKRNRSGQGIVEKIEYDPNRSGFLALISYKEDDIKSYILAPQGMKPGDVVTAGNDADILPGNCLLLKHIPVGSFVHNVELKPGNGAAIARAAGCYAQIVGRDGQYVLLRLRSGQIRLILSSCKATIGVVSNPDHKNRKLGKAGRSRWLGIRPTVRGIAMNPVDHPHGGGEGKTSGGRHPVTPWGVATKGKKTRRRNKSSDKYIKQLKG</sequence>